<protein>
    <recommendedName>
        <fullName>Alpha-mannosidase 2C1</fullName>
        <ecNumber evidence="2 3">3.2.1.24</ecNumber>
    </recommendedName>
    <alternativeName>
        <fullName>Alpha-D-mannoside mannohydrolase</fullName>
    </alternativeName>
    <alternativeName>
        <fullName>Mannosidase alpha class 2C member 1</fullName>
    </alternativeName>
    <alternativeName>
        <fullName evidence="4">Neutral/cytosolic alpha-mannosidase</fullName>
    </alternativeName>
</protein>
<dbReference type="EC" id="3.2.1.24" evidence="2 3"/>
<dbReference type="EMBL" id="AH014888">
    <property type="protein sequence ID" value="AAY53557.1"/>
    <property type="molecule type" value="Genomic_DNA"/>
</dbReference>
<dbReference type="EMBL" id="AY996589">
    <property type="protein sequence ID" value="AAY53557.1"/>
    <property type="status" value="JOINED"/>
    <property type="molecule type" value="Genomic_DNA"/>
</dbReference>
<dbReference type="EMBL" id="AY996590">
    <property type="protein sequence ID" value="AAY53557.1"/>
    <property type="status" value="JOINED"/>
    <property type="molecule type" value="Genomic_DNA"/>
</dbReference>
<dbReference type="EMBL" id="AY996591">
    <property type="protein sequence ID" value="AAY53557.1"/>
    <property type="status" value="JOINED"/>
    <property type="molecule type" value="Genomic_DNA"/>
</dbReference>
<dbReference type="EMBL" id="AY996592">
    <property type="protein sequence ID" value="AAY53557.1"/>
    <property type="status" value="JOINED"/>
    <property type="molecule type" value="Genomic_DNA"/>
</dbReference>
<dbReference type="EMBL" id="AY996593">
    <property type="protein sequence ID" value="AAY53557.1"/>
    <property type="status" value="JOINED"/>
    <property type="molecule type" value="Genomic_DNA"/>
</dbReference>
<dbReference type="EMBL" id="AY996594">
    <property type="protein sequence ID" value="AAY53557.1"/>
    <property type="status" value="JOINED"/>
    <property type="molecule type" value="Genomic_DNA"/>
</dbReference>
<dbReference type="EMBL" id="AY996595">
    <property type="protein sequence ID" value="AAY53557.1"/>
    <property type="status" value="JOINED"/>
    <property type="molecule type" value="Genomic_DNA"/>
</dbReference>
<dbReference type="EMBL" id="AY996597">
    <property type="protein sequence ID" value="AAY53557.1"/>
    <property type="status" value="JOINED"/>
    <property type="molecule type" value="Genomic_DNA"/>
</dbReference>
<dbReference type="EMBL" id="AY996598">
    <property type="protein sequence ID" value="AAY53557.1"/>
    <property type="status" value="JOINED"/>
    <property type="molecule type" value="Genomic_DNA"/>
</dbReference>
<dbReference type="EMBL" id="AY996599">
    <property type="protein sequence ID" value="AAY53557.1"/>
    <property type="status" value="JOINED"/>
    <property type="molecule type" value="Genomic_DNA"/>
</dbReference>
<dbReference type="EMBL" id="AY996600">
    <property type="protein sequence ID" value="AAY53557.1"/>
    <property type="status" value="JOINED"/>
    <property type="molecule type" value="Genomic_DNA"/>
</dbReference>
<dbReference type="EMBL" id="AY996601">
    <property type="protein sequence ID" value="AAY53557.1"/>
    <property type="status" value="JOINED"/>
    <property type="molecule type" value="Genomic_DNA"/>
</dbReference>
<dbReference type="EMBL" id="AY996602">
    <property type="protein sequence ID" value="AAY53557.1"/>
    <property type="status" value="JOINED"/>
    <property type="molecule type" value="Genomic_DNA"/>
</dbReference>
<dbReference type="EMBL" id="AY996603">
    <property type="protein sequence ID" value="AAY53557.1"/>
    <property type="status" value="JOINED"/>
    <property type="molecule type" value="Genomic_DNA"/>
</dbReference>
<dbReference type="EMBL" id="AY996604">
    <property type="protein sequence ID" value="AAY53557.1"/>
    <property type="status" value="JOINED"/>
    <property type="molecule type" value="Genomic_DNA"/>
</dbReference>
<dbReference type="EMBL" id="AY996605">
    <property type="protein sequence ID" value="AAY53557.1"/>
    <property type="status" value="JOINED"/>
    <property type="molecule type" value="Genomic_DNA"/>
</dbReference>
<dbReference type="EMBL" id="AY996606">
    <property type="protein sequence ID" value="AAY53557.1"/>
    <property type="status" value="JOINED"/>
    <property type="molecule type" value="Genomic_DNA"/>
</dbReference>
<dbReference type="EMBL" id="AY996607">
    <property type="protein sequence ID" value="AAY53557.1"/>
    <property type="status" value="JOINED"/>
    <property type="molecule type" value="Genomic_DNA"/>
</dbReference>
<dbReference type="EMBL" id="AY996608">
    <property type="protein sequence ID" value="AAY53557.1"/>
    <property type="status" value="JOINED"/>
    <property type="molecule type" value="Genomic_DNA"/>
</dbReference>
<dbReference type="EMBL" id="AY996609">
    <property type="protein sequence ID" value="AAY53557.1"/>
    <property type="status" value="JOINED"/>
    <property type="molecule type" value="Genomic_DNA"/>
</dbReference>
<dbReference type="EMBL" id="AY996610">
    <property type="protein sequence ID" value="AAY53557.1"/>
    <property type="status" value="JOINED"/>
    <property type="molecule type" value="Genomic_DNA"/>
</dbReference>
<dbReference type="EMBL" id="AY996611">
    <property type="protein sequence ID" value="AAY53557.1"/>
    <property type="status" value="JOINED"/>
    <property type="molecule type" value="Genomic_DNA"/>
</dbReference>
<dbReference type="EMBL" id="AY996612">
    <property type="protein sequence ID" value="AAY53557.1"/>
    <property type="status" value="JOINED"/>
    <property type="molecule type" value="Genomic_DNA"/>
</dbReference>
<dbReference type="EMBL" id="AY996613">
    <property type="protein sequence ID" value="AAY53557.1"/>
    <property type="status" value="JOINED"/>
    <property type="molecule type" value="Genomic_DNA"/>
</dbReference>
<dbReference type="EMBL" id="AK153935">
    <property type="protein sequence ID" value="BAE32264.1"/>
    <property type="molecule type" value="mRNA"/>
</dbReference>
<dbReference type="EMBL" id="CH466522">
    <property type="protein sequence ID" value="EDL25887.1"/>
    <property type="molecule type" value="Genomic_DNA"/>
</dbReference>
<dbReference type="EMBL" id="BC016253">
    <property type="protein sequence ID" value="AAH16253.1"/>
    <property type="molecule type" value="mRNA"/>
</dbReference>
<dbReference type="CCDS" id="CCDS40646.1"/>
<dbReference type="RefSeq" id="NP_082912.1">
    <property type="nucleotide sequence ID" value="NM_028636.2"/>
</dbReference>
<dbReference type="SMR" id="Q91W89"/>
<dbReference type="BioGRID" id="216226">
    <property type="interactions" value="7"/>
</dbReference>
<dbReference type="FunCoup" id="Q91W89">
    <property type="interactions" value="1803"/>
</dbReference>
<dbReference type="STRING" id="10090.ENSMUSP00000125478"/>
<dbReference type="CAZy" id="GH38">
    <property type="family name" value="Glycoside Hydrolase Family 38"/>
</dbReference>
<dbReference type="GlyGen" id="Q91W89">
    <property type="glycosylation" value="4 sites, 1 N-linked glycan (1 site), 1 O-linked glycan (1 site)"/>
</dbReference>
<dbReference type="iPTMnet" id="Q91W89"/>
<dbReference type="PhosphoSitePlus" id="Q91W89"/>
<dbReference type="SwissPalm" id="Q91W89"/>
<dbReference type="jPOST" id="Q91W89"/>
<dbReference type="PaxDb" id="10090-ENSMUSP00000125478"/>
<dbReference type="ProteomicsDB" id="292141"/>
<dbReference type="Pumba" id="Q91W89"/>
<dbReference type="Antibodypedia" id="27278">
    <property type="antibodies" value="102 antibodies from 20 providers"/>
</dbReference>
<dbReference type="DNASU" id="73744"/>
<dbReference type="Ensembl" id="ENSMUST00000160147.8">
    <property type="protein sequence ID" value="ENSMUSP00000125478.2"/>
    <property type="gene ID" value="ENSMUSG00000032295.16"/>
</dbReference>
<dbReference type="GeneID" id="73744"/>
<dbReference type="KEGG" id="mmu:73744"/>
<dbReference type="UCSC" id="uc009pud.1">
    <property type="organism name" value="mouse"/>
</dbReference>
<dbReference type="AGR" id="MGI:1920994"/>
<dbReference type="CTD" id="4123"/>
<dbReference type="MGI" id="MGI:1920994">
    <property type="gene designation" value="Man2c1"/>
</dbReference>
<dbReference type="VEuPathDB" id="HostDB:ENSMUSG00000032295"/>
<dbReference type="eggNOG" id="KOG4342">
    <property type="taxonomic scope" value="Eukaryota"/>
</dbReference>
<dbReference type="GeneTree" id="ENSGT01030000234638"/>
<dbReference type="InParanoid" id="Q91W89"/>
<dbReference type="OMA" id="GQYWDAW"/>
<dbReference type="OrthoDB" id="10261055at2759"/>
<dbReference type="PhylomeDB" id="Q91W89"/>
<dbReference type="TreeFam" id="TF300335"/>
<dbReference type="Reactome" id="R-MMU-8853383">
    <property type="pathway name" value="Lysosomal oligosaccharide catabolism"/>
</dbReference>
<dbReference type="BioGRID-ORCS" id="73744">
    <property type="hits" value="1 hit in 78 CRISPR screens"/>
</dbReference>
<dbReference type="ChiTaRS" id="Man2c1">
    <property type="organism name" value="mouse"/>
</dbReference>
<dbReference type="PRO" id="PR:Q91W89"/>
<dbReference type="Proteomes" id="UP000000589">
    <property type="component" value="Chromosome 9"/>
</dbReference>
<dbReference type="RNAct" id="Q91W89">
    <property type="molecule type" value="protein"/>
</dbReference>
<dbReference type="Bgee" id="ENSMUSG00000032295">
    <property type="expression patterns" value="Expressed in internal carotid artery and 260 other cell types or tissues"/>
</dbReference>
<dbReference type="ExpressionAtlas" id="Q91W89">
    <property type="expression patterns" value="baseline and differential"/>
</dbReference>
<dbReference type="GO" id="GO:0005829">
    <property type="term" value="C:cytosol"/>
    <property type="evidence" value="ECO:0000314"/>
    <property type="project" value="MGI"/>
</dbReference>
<dbReference type="GO" id="GO:0005654">
    <property type="term" value="C:nucleoplasm"/>
    <property type="evidence" value="ECO:0007669"/>
    <property type="project" value="Ensembl"/>
</dbReference>
<dbReference type="GO" id="GO:0004559">
    <property type="term" value="F:alpha-mannosidase activity"/>
    <property type="evidence" value="ECO:0000314"/>
    <property type="project" value="MGI"/>
</dbReference>
<dbReference type="GO" id="GO:0030246">
    <property type="term" value="F:carbohydrate binding"/>
    <property type="evidence" value="ECO:0007669"/>
    <property type="project" value="InterPro"/>
</dbReference>
<dbReference type="GO" id="GO:0046872">
    <property type="term" value="F:metal ion binding"/>
    <property type="evidence" value="ECO:0007669"/>
    <property type="project" value="UniProtKB-KW"/>
</dbReference>
<dbReference type="GO" id="GO:0006013">
    <property type="term" value="P:mannose metabolic process"/>
    <property type="evidence" value="ECO:0007669"/>
    <property type="project" value="InterPro"/>
</dbReference>
<dbReference type="GO" id="GO:0009313">
    <property type="term" value="P:oligosaccharide catabolic process"/>
    <property type="evidence" value="ECO:0000314"/>
    <property type="project" value="MGI"/>
</dbReference>
<dbReference type="CDD" id="cd10813">
    <property type="entry name" value="GH38N_AMII_Man2C1"/>
    <property type="match status" value="1"/>
</dbReference>
<dbReference type="FunFam" id="2.60.40.2220:FF:000001">
    <property type="entry name" value="Alpha-mannosidase 2C1"/>
    <property type="match status" value="1"/>
</dbReference>
<dbReference type="FunFam" id="1.20.1270.50:FF:000004">
    <property type="entry name" value="alpha-mannosidase 2C1 isoform X1"/>
    <property type="match status" value="1"/>
</dbReference>
<dbReference type="FunFam" id="3.20.110.10:FF:000002">
    <property type="entry name" value="alpha-mannosidase 2C1 isoform X1"/>
    <property type="match status" value="1"/>
</dbReference>
<dbReference type="FunFam" id="2.70.98.30:FF:000001">
    <property type="entry name" value="alpha-mannosidase 2C1 isoform X2"/>
    <property type="match status" value="1"/>
</dbReference>
<dbReference type="Gene3D" id="2.60.40.2220">
    <property type="match status" value="1"/>
</dbReference>
<dbReference type="Gene3D" id="3.20.110.10">
    <property type="entry name" value="Glycoside hydrolase 38, N terminal domain"/>
    <property type="match status" value="1"/>
</dbReference>
<dbReference type="Gene3D" id="1.20.1270.50">
    <property type="entry name" value="Glycoside hydrolase family 38, central domain"/>
    <property type="match status" value="1"/>
</dbReference>
<dbReference type="Gene3D" id="2.70.98.30">
    <property type="entry name" value="Golgi alpha-mannosidase II, domain 4"/>
    <property type="match status" value="1"/>
</dbReference>
<dbReference type="InterPro" id="IPR054723">
    <property type="entry name" value="Ams1-like_N"/>
</dbReference>
<dbReference type="InterPro" id="IPR011013">
    <property type="entry name" value="Gal_mutarotase_sf_dom"/>
</dbReference>
<dbReference type="InterPro" id="IPR041147">
    <property type="entry name" value="GH38_C"/>
</dbReference>
<dbReference type="InterPro" id="IPR011330">
    <property type="entry name" value="Glyco_hydro/deAcase_b/a-brl"/>
</dbReference>
<dbReference type="InterPro" id="IPR011682">
    <property type="entry name" value="Glyco_hydro_38_C"/>
</dbReference>
<dbReference type="InterPro" id="IPR015341">
    <property type="entry name" value="Glyco_hydro_38_cen"/>
</dbReference>
<dbReference type="InterPro" id="IPR037094">
    <property type="entry name" value="Glyco_hydro_38_cen_sf"/>
</dbReference>
<dbReference type="InterPro" id="IPR000602">
    <property type="entry name" value="Glyco_hydro_38_N"/>
</dbReference>
<dbReference type="InterPro" id="IPR027291">
    <property type="entry name" value="Glyco_hydro_38_N_sf"/>
</dbReference>
<dbReference type="InterPro" id="IPR028995">
    <property type="entry name" value="Glyco_hydro_57/38_cen_sf"/>
</dbReference>
<dbReference type="PANTHER" id="PTHR46017">
    <property type="entry name" value="ALPHA-MANNOSIDASE 2C1"/>
    <property type="match status" value="1"/>
</dbReference>
<dbReference type="PANTHER" id="PTHR46017:SF1">
    <property type="entry name" value="ALPHA-MANNOSIDASE 2C1"/>
    <property type="match status" value="1"/>
</dbReference>
<dbReference type="Pfam" id="PF09261">
    <property type="entry name" value="Alpha-mann_mid"/>
    <property type="match status" value="1"/>
</dbReference>
<dbReference type="Pfam" id="PF22907">
    <property type="entry name" value="Ams1-like_1st"/>
    <property type="match status" value="1"/>
</dbReference>
<dbReference type="Pfam" id="PF17677">
    <property type="entry name" value="Glyco_hydro38C2"/>
    <property type="match status" value="1"/>
</dbReference>
<dbReference type="Pfam" id="PF07748">
    <property type="entry name" value="Glyco_hydro_38C"/>
    <property type="match status" value="1"/>
</dbReference>
<dbReference type="Pfam" id="PF01074">
    <property type="entry name" value="Glyco_hydro_38N"/>
    <property type="match status" value="1"/>
</dbReference>
<dbReference type="SMART" id="SM00872">
    <property type="entry name" value="Alpha-mann_mid"/>
    <property type="match status" value="1"/>
</dbReference>
<dbReference type="SUPFAM" id="SSF88688">
    <property type="entry name" value="Families 57/38 glycoside transferase middle domain"/>
    <property type="match status" value="1"/>
</dbReference>
<dbReference type="SUPFAM" id="SSF74650">
    <property type="entry name" value="Galactose mutarotase-like"/>
    <property type="match status" value="1"/>
</dbReference>
<dbReference type="SUPFAM" id="SSF88713">
    <property type="entry name" value="Glycoside hydrolase/deacetylase"/>
    <property type="match status" value="1"/>
</dbReference>
<gene>
    <name evidence="4" type="primary">Man2c1</name>
</gene>
<proteinExistence type="evidence at protein level"/>
<feature type="chain" id="PRO_0000206908" description="Alpha-mannosidase 2C1">
    <location>
        <begin position="1"/>
        <end position="1039"/>
    </location>
</feature>
<feature type="active site" description="Nucleophile" evidence="1">
    <location>
        <position position="371"/>
    </location>
</feature>
<feature type="binding site" evidence="5">
    <location>
        <position position="259"/>
    </location>
    <ligand>
        <name>Co(2+)</name>
        <dbReference type="ChEBI" id="CHEBI:48828"/>
    </ligand>
</feature>
<feature type="binding site" evidence="5">
    <location>
        <position position="261"/>
    </location>
    <ligand>
        <name>Co(2+)</name>
        <dbReference type="ChEBI" id="CHEBI:48828"/>
    </ligand>
</feature>
<feature type="binding site" evidence="5">
    <location>
        <position position="371"/>
    </location>
    <ligand>
        <name>Co(2+)</name>
        <dbReference type="ChEBI" id="CHEBI:48828"/>
    </ligand>
</feature>
<feature type="binding site" evidence="5">
    <location>
        <position position="576"/>
    </location>
    <ligand>
        <name>Co(2+)</name>
        <dbReference type="ChEBI" id="CHEBI:48828"/>
    </ligand>
</feature>
<accession>Q91W89</accession>
<accession>Q3ZCX9</accession>
<reference key="1">
    <citation type="journal article" date="2006" name="Biochim. Biophys. Acta">
        <title>Cloning and expression of mouse cytosolic alpha-mannosidase (Man2c1).</title>
        <authorList>
            <person name="Costanzi E."/>
            <person name="Balducci C."/>
            <person name="Cacan R."/>
            <person name="Duvet S."/>
            <person name="Orlacchio A."/>
            <person name="Beccari T."/>
        </authorList>
    </citation>
    <scope>NUCLEOTIDE SEQUENCE [GENOMIC DNA]</scope>
    <scope>FUNCTION</scope>
    <scope>CATALYTIC ACTIVITY</scope>
    <scope>COFACTOR</scope>
    <scope>ACTIVITY REGULATION</scope>
    <scope>SUBCELLULAR LOCATION</scope>
    <scope>TISSUE SPECIFICITY</scope>
    <source>
        <strain evidence="6">129</strain>
        <tissue evidence="6">Liver</tissue>
    </source>
</reference>
<reference key="2">
    <citation type="journal article" date="2005" name="Science">
        <title>The transcriptional landscape of the mammalian genome.</title>
        <authorList>
            <person name="Carninci P."/>
            <person name="Kasukawa T."/>
            <person name="Katayama S."/>
            <person name="Gough J."/>
            <person name="Frith M.C."/>
            <person name="Maeda N."/>
            <person name="Oyama R."/>
            <person name="Ravasi T."/>
            <person name="Lenhard B."/>
            <person name="Wells C."/>
            <person name="Kodzius R."/>
            <person name="Shimokawa K."/>
            <person name="Bajic V.B."/>
            <person name="Brenner S.E."/>
            <person name="Batalov S."/>
            <person name="Forrest A.R."/>
            <person name="Zavolan M."/>
            <person name="Davis M.J."/>
            <person name="Wilming L.G."/>
            <person name="Aidinis V."/>
            <person name="Allen J.E."/>
            <person name="Ambesi-Impiombato A."/>
            <person name="Apweiler R."/>
            <person name="Aturaliya R.N."/>
            <person name="Bailey T.L."/>
            <person name="Bansal M."/>
            <person name="Baxter L."/>
            <person name="Beisel K.W."/>
            <person name="Bersano T."/>
            <person name="Bono H."/>
            <person name="Chalk A.M."/>
            <person name="Chiu K.P."/>
            <person name="Choudhary V."/>
            <person name="Christoffels A."/>
            <person name="Clutterbuck D.R."/>
            <person name="Crowe M.L."/>
            <person name="Dalla E."/>
            <person name="Dalrymple B.P."/>
            <person name="de Bono B."/>
            <person name="Della Gatta G."/>
            <person name="di Bernardo D."/>
            <person name="Down T."/>
            <person name="Engstrom P."/>
            <person name="Fagiolini M."/>
            <person name="Faulkner G."/>
            <person name="Fletcher C.F."/>
            <person name="Fukushima T."/>
            <person name="Furuno M."/>
            <person name="Futaki S."/>
            <person name="Gariboldi M."/>
            <person name="Georgii-Hemming P."/>
            <person name="Gingeras T.R."/>
            <person name="Gojobori T."/>
            <person name="Green R.E."/>
            <person name="Gustincich S."/>
            <person name="Harbers M."/>
            <person name="Hayashi Y."/>
            <person name="Hensch T.K."/>
            <person name="Hirokawa N."/>
            <person name="Hill D."/>
            <person name="Huminiecki L."/>
            <person name="Iacono M."/>
            <person name="Ikeo K."/>
            <person name="Iwama A."/>
            <person name="Ishikawa T."/>
            <person name="Jakt M."/>
            <person name="Kanapin A."/>
            <person name="Katoh M."/>
            <person name="Kawasawa Y."/>
            <person name="Kelso J."/>
            <person name="Kitamura H."/>
            <person name="Kitano H."/>
            <person name="Kollias G."/>
            <person name="Krishnan S.P."/>
            <person name="Kruger A."/>
            <person name="Kummerfeld S.K."/>
            <person name="Kurochkin I.V."/>
            <person name="Lareau L.F."/>
            <person name="Lazarevic D."/>
            <person name="Lipovich L."/>
            <person name="Liu J."/>
            <person name="Liuni S."/>
            <person name="McWilliam S."/>
            <person name="Madan Babu M."/>
            <person name="Madera M."/>
            <person name="Marchionni L."/>
            <person name="Matsuda H."/>
            <person name="Matsuzawa S."/>
            <person name="Miki H."/>
            <person name="Mignone F."/>
            <person name="Miyake S."/>
            <person name="Morris K."/>
            <person name="Mottagui-Tabar S."/>
            <person name="Mulder N."/>
            <person name="Nakano N."/>
            <person name="Nakauchi H."/>
            <person name="Ng P."/>
            <person name="Nilsson R."/>
            <person name="Nishiguchi S."/>
            <person name="Nishikawa S."/>
            <person name="Nori F."/>
            <person name="Ohara O."/>
            <person name="Okazaki Y."/>
            <person name="Orlando V."/>
            <person name="Pang K.C."/>
            <person name="Pavan W.J."/>
            <person name="Pavesi G."/>
            <person name="Pesole G."/>
            <person name="Petrovsky N."/>
            <person name="Piazza S."/>
            <person name="Reed J."/>
            <person name="Reid J.F."/>
            <person name="Ring B.Z."/>
            <person name="Ringwald M."/>
            <person name="Rost B."/>
            <person name="Ruan Y."/>
            <person name="Salzberg S.L."/>
            <person name="Sandelin A."/>
            <person name="Schneider C."/>
            <person name="Schoenbach C."/>
            <person name="Sekiguchi K."/>
            <person name="Semple C.A."/>
            <person name="Seno S."/>
            <person name="Sessa L."/>
            <person name="Sheng Y."/>
            <person name="Shibata Y."/>
            <person name="Shimada H."/>
            <person name="Shimada K."/>
            <person name="Silva D."/>
            <person name="Sinclair B."/>
            <person name="Sperling S."/>
            <person name="Stupka E."/>
            <person name="Sugiura K."/>
            <person name="Sultana R."/>
            <person name="Takenaka Y."/>
            <person name="Taki K."/>
            <person name="Tammoja K."/>
            <person name="Tan S.L."/>
            <person name="Tang S."/>
            <person name="Taylor M.S."/>
            <person name="Tegner J."/>
            <person name="Teichmann S.A."/>
            <person name="Ueda H.R."/>
            <person name="van Nimwegen E."/>
            <person name="Verardo R."/>
            <person name="Wei C.L."/>
            <person name="Yagi K."/>
            <person name="Yamanishi H."/>
            <person name="Zabarovsky E."/>
            <person name="Zhu S."/>
            <person name="Zimmer A."/>
            <person name="Hide W."/>
            <person name="Bult C."/>
            <person name="Grimmond S.M."/>
            <person name="Teasdale R.D."/>
            <person name="Liu E.T."/>
            <person name="Brusic V."/>
            <person name="Quackenbush J."/>
            <person name="Wahlestedt C."/>
            <person name="Mattick J.S."/>
            <person name="Hume D.A."/>
            <person name="Kai C."/>
            <person name="Sasaki D."/>
            <person name="Tomaru Y."/>
            <person name="Fukuda S."/>
            <person name="Kanamori-Katayama M."/>
            <person name="Suzuki M."/>
            <person name="Aoki J."/>
            <person name="Arakawa T."/>
            <person name="Iida J."/>
            <person name="Imamura K."/>
            <person name="Itoh M."/>
            <person name="Kato T."/>
            <person name="Kawaji H."/>
            <person name="Kawagashira N."/>
            <person name="Kawashima T."/>
            <person name="Kojima M."/>
            <person name="Kondo S."/>
            <person name="Konno H."/>
            <person name="Nakano K."/>
            <person name="Ninomiya N."/>
            <person name="Nishio T."/>
            <person name="Okada M."/>
            <person name="Plessy C."/>
            <person name="Shibata K."/>
            <person name="Shiraki T."/>
            <person name="Suzuki S."/>
            <person name="Tagami M."/>
            <person name="Waki K."/>
            <person name="Watahiki A."/>
            <person name="Okamura-Oho Y."/>
            <person name="Suzuki H."/>
            <person name="Kawai J."/>
            <person name="Hayashizaki Y."/>
        </authorList>
    </citation>
    <scope>NUCLEOTIDE SEQUENCE [LARGE SCALE MRNA]</scope>
    <source>
        <strain evidence="7">NOD</strain>
        <tissue evidence="7">Thymus</tissue>
    </source>
</reference>
<reference key="3">
    <citation type="submission" date="2005-07" db="EMBL/GenBank/DDBJ databases">
        <authorList>
            <person name="Mural R.J."/>
            <person name="Adams M.D."/>
            <person name="Myers E.W."/>
            <person name="Smith H.O."/>
            <person name="Venter J.C."/>
        </authorList>
    </citation>
    <scope>NUCLEOTIDE SEQUENCE [LARGE SCALE GENOMIC DNA]</scope>
</reference>
<reference key="4">
    <citation type="journal article" date="2004" name="Genome Res.">
        <title>The status, quality, and expansion of the NIH full-length cDNA project: the Mammalian Gene Collection (MGC).</title>
        <authorList>
            <consortium name="The MGC Project Team"/>
        </authorList>
    </citation>
    <scope>NUCLEOTIDE SEQUENCE [LARGE SCALE MRNA]</scope>
    <source>
        <tissue>Salivary gland</tissue>
    </source>
</reference>
<reference key="5">
    <citation type="journal article" date="2010" name="Cell">
        <title>A tissue-specific atlas of mouse protein phosphorylation and expression.</title>
        <authorList>
            <person name="Huttlin E.L."/>
            <person name="Jedrychowski M.P."/>
            <person name="Elias J.E."/>
            <person name="Goswami T."/>
            <person name="Rad R."/>
            <person name="Beausoleil S.A."/>
            <person name="Villen J."/>
            <person name="Haas W."/>
            <person name="Sowa M.E."/>
            <person name="Gygi S.P."/>
        </authorList>
    </citation>
    <scope>IDENTIFICATION BY MASS SPECTROMETRY [LARGE SCALE ANALYSIS]</scope>
    <source>
        <tissue>Brain</tissue>
        <tissue>Brown adipose tissue</tissue>
        <tissue>Heart</tissue>
        <tissue>Kidney</tissue>
        <tissue>Liver</tissue>
        <tissue>Lung</tissue>
        <tissue>Pancreas</tissue>
        <tissue>Spleen</tissue>
        <tissue>Testis</tissue>
    </source>
</reference>
<reference key="6">
    <citation type="journal article" date="2014" name="J. Biol. Chem.">
        <title>Accumulation of free oligosaccharides and tissue damage in cytosolic alpha-mannosidase (Man2c1)-deficient mice.</title>
        <authorList>
            <person name="Paciotti S."/>
            <person name="Persichetti E."/>
            <person name="Klein K."/>
            <person name="Tasegian A."/>
            <person name="Duvet S."/>
            <person name="Hartmann D."/>
            <person name="Gieselmann V."/>
            <person name="Beccari T."/>
        </authorList>
    </citation>
    <scope>FUNCTION</scope>
    <scope>CATALYTIC ACTIVITY</scope>
    <scope>TISSUE SPECIFICITY</scope>
    <scope>DISRUPTION PHENOTYPE</scope>
</reference>
<name>MA2C1_MOUSE</name>
<organism>
    <name type="scientific">Mus musculus</name>
    <name type="common">Mouse</name>
    <dbReference type="NCBI Taxonomy" id="10090"/>
    <lineage>
        <taxon>Eukaryota</taxon>
        <taxon>Metazoa</taxon>
        <taxon>Chordata</taxon>
        <taxon>Craniata</taxon>
        <taxon>Vertebrata</taxon>
        <taxon>Euteleostomi</taxon>
        <taxon>Mammalia</taxon>
        <taxon>Eutheria</taxon>
        <taxon>Euarchontoglires</taxon>
        <taxon>Glires</taxon>
        <taxon>Rodentia</taxon>
        <taxon>Myomorpha</taxon>
        <taxon>Muroidea</taxon>
        <taxon>Muridae</taxon>
        <taxon>Murinae</taxon>
        <taxon>Mus</taxon>
        <taxon>Mus</taxon>
    </lineage>
</organism>
<sequence>MAAAPFLKHWRTTFERVEKFVSPIYFTDCNLRGRLFGDSCSVTLSSFLTPERLPYEKAVQQNFSPAQVGDSFGPTWWTCWFRVELVIPEVWVGQEVHLCWESDGESLVWRDGEPVQGLTKEGEKTSYVLSERLRASDPRSLTLYVEVACNGLLGAGKGSMIAAPDPEKMFQLSQAKLAVFHRDVHSLLVDLELLLGVAKGLGEDSQRSFQALHTANQMVNICDPAQPETYPAAKALASKFFGQHGGESQHTIHAMGHCHIDTAWLWPFKETVRKCARSWSTAVTLMEQNTDFIFACSQAQQLEWVKSQYPGLHARLQEFACRGQFVPVGGTWVEMDGNLPSGEAMVRQFLQGQNFFLQEFGKMCSEFWLPDTFGYSAQLPQIMQGCGIKRFLTQKLSWNLVNSFPHHTFFWEGLDGSRVLVHFPPGDSYGMQGSVEEVLKTVTNNRDKGRTNHSGFLFGFGDGGGGPTQTMLDRLKRLSNTDGLPRVQLSSPGQLFTALERDSGQLCTWVGELFLELHNGTYTTHAQLKKGNRECEQILHDVEVLSSLALARSAQFLYPAAQLQHLWRLLLLNQFHDVVTGSCIQLVAEDAMNYYEDIRSHGNPLLSAAAAALCAGEPGPKGLLIINTLPWKRTEVLALPKPCGAHSLALVTVPSIGYAPAPTPTSLQPLLPQQPVFVMQETDGSVTLDNGIIRVRLDPTGCLTSLVLVASGREAIAEGALGNQFVLFDDVPLYWDAWDVMDYHLETRKPVLGQAGTLAVGTEGGLRGSAWFLLQISPNSRLSQEVVLDVGCPYVRFHTEVHWHEAHKFLKVEFPARIRSPQATYEIQFGHLQRPTHNNTSWDWARYEVWAHRWIDLSECDFGLALLNNCKYGASVRGNVLSLSLLRAPKAPDATADMGRHEFTYALMPHKGSFQEAGVIHAAYNLNFPLLALPAPGPAPDTTWSAFSVSSPAVVLETIKQAERCHQHRTLVLRLYEAHGSHVDCWLHTSLPVQEATLCDLLEQRDPTGHLSLQDNRLKLTFSPFQVRSLLLVLQSPPN</sequence>
<keyword id="KW-0170">Cobalt</keyword>
<keyword id="KW-0963">Cytoplasm</keyword>
<keyword id="KW-0326">Glycosidase</keyword>
<keyword id="KW-0378">Hydrolase</keyword>
<keyword id="KW-0479">Metal-binding</keyword>
<keyword id="KW-1185">Reference proteome</keyword>
<evidence type="ECO:0000250" key="1">
    <source>
        <dbReference type="UniProtKB" id="Q29451"/>
    </source>
</evidence>
<evidence type="ECO:0000269" key="2">
    <source>
    </source>
</evidence>
<evidence type="ECO:0000269" key="3">
    <source>
    </source>
</evidence>
<evidence type="ECO:0000303" key="4">
    <source>
    </source>
</evidence>
<evidence type="ECO:0000305" key="5"/>
<evidence type="ECO:0000312" key="6">
    <source>
        <dbReference type="EMBL" id="AAY53557.1"/>
    </source>
</evidence>
<evidence type="ECO:0000312" key="7">
    <source>
        <dbReference type="EMBL" id="BAE32264.1"/>
    </source>
</evidence>
<comment type="function">
    <text evidence="2 3">Cleaves alpha 1,2-, alpha 1,3-, and alpha 1,6-linked mannose residues from glycoproteins. Involved in the degradation of free oligosaccharides in the cytoplasm.</text>
</comment>
<comment type="catalytic activity">
    <reaction evidence="2 3">
        <text>Hydrolysis of terminal, non-reducing alpha-D-mannose residues in alpha-D-mannosides.</text>
        <dbReference type="EC" id="3.2.1.24"/>
    </reaction>
</comment>
<comment type="cofactor">
    <cofactor evidence="2">
        <name>Co(2+)</name>
        <dbReference type="ChEBI" id="CHEBI:48828"/>
    </cofactor>
</comment>
<comment type="activity regulation">
    <text evidence="2">Inhibited by 1,4-dideoxy-1,4-imino-d-mannitol (DIM) and EDTA.</text>
</comment>
<comment type="subcellular location">
    <subcellularLocation>
        <location evidence="2">Cytoplasm</location>
    </subcellularLocation>
</comment>
<comment type="tissue specificity">
    <text evidence="2 3">Expressed in kidney and liver (at protein level) (PubMed:24550399). Widely expressed, with highest levels in lung, ovary and testis (PubMed:16904268). Also detected at lower levels in heart, brain, liver, spleen, kidney and thymus (PubMed:16904268).</text>
</comment>
<comment type="disruption phenotype">
    <text evidence="3">Viable and fertile with no gross defects. Loss of neutral mannosidase activity leading to accumulation of free higher-order oligosaccharides such as Man(8-9)GlcNAc(1) in many organs, particularly liver and heart. Tissues show histopathological changes with strongest defects observed in liver, small intestine, kidney and central nervous system (CNS). In liver, hepatocytes appear swollen with increased levels of glycogen and accumulation of lipid droplets. In the small intestine, enterocytes accumulate glycogen apically and also develop vacuoles in the basal cell region. In the CNS, neurons in isocortex lamina V show signs of degeneration with formation of vacuoles in basal cell regions. Vacuolation is also found in glial cells of white matter tracts. In kidney, there are signs of fibrosis along Bowman's capsule and a small number of glomeruli appear to be collapsed.</text>
</comment>
<comment type="similarity">
    <text evidence="5">Belongs to the glycosyl hydrolase 38 family.</text>
</comment>